<comment type="function">
    <text evidence="1">Catalyzes the methyl esterification of L-isoaspartyl residues in peptides and proteins that result from spontaneous decomposition of normal L-aspartyl and L-asparaginyl residues. It plays a role in the repair and/or degradation of damaged proteins.</text>
</comment>
<comment type="catalytic activity">
    <reaction evidence="1">
        <text>[protein]-L-isoaspartate + S-adenosyl-L-methionine = [protein]-L-isoaspartate alpha-methyl ester + S-adenosyl-L-homocysteine</text>
        <dbReference type="Rhea" id="RHEA:12705"/>
        <dbReference type="Rhea" id="RHEA-COMP:12143"/>
        <dbReference type="Rhea" id="RHEA-COMP:12144"/>
        <dbReference type="ChEBI" id="CHEBI:57856"/>
        <dbReference type="ChEBI" id="CHEBI:59789"/>
        <dbReference type="ChEBI" id="CHEBI:90596"/>
        <dbReference type="ChEBI" id="CHEBI:90598"/>
        <dbReference type="EC" id="2.1.1.77"/>
    </reaction>
</comment>
<comment type="subcellular location">
    <subcellularLocation>
        <location evidence="1">Cytoplasm</location>
    </subcellularLocation>
</comment>
<comment type="similarity">
    <text evidence="1">Belongs to the methyltransferase superfamily. L-isoaspartyl/D-aspartyl protein methyltransferase family.</text>
</comment>
<evidence type="ECO:0000255" key="1">
    <source>
        <dbReference type="HAMAP-Rule" id="MF_00090"/>
    </source>
</evidence>
<keyword id="KW-0963">Cytoplasm</keyword>
<keyword id="KW-0489">Methyltransferase</keyword>
<keyword id="KW-1185">Reference proteome</keyword>
<keyword id="KW-0949">S-adenosyl-L-methionine</keyword>
<keyword id="KW-0808">Transferase</keyword>
<name>PIMT_SHEWM</name>
<gene>
    <name evidence="1" type="primary">pcm</name>
    <name type="ordered locus">Swoo_3344</name>
</gene>
<accession>B1KPT0</accession>
<organism>
    <name type="scientific">Shewanella woodyi (strain ATCC 51908 / MS32)</name>
    <dbReference type="NCBI Taxonomy" id="392500"/>
    <lineage>
        <taxon>Bacteria</taxon>
        <taxon>Pseudomonadati</taxon>
        <taxon>Pseudomonadota</taxon>
        <taxon>Gammaproteobacteria</taxon>
        <taxon>Alteromonadales</taxon>
        <taxon>Shewanellaceae</taxon>
        <taxon>Shewanella</taxon>
    </lineage>
</organism>
<dbReference type="EC" id="2.1.1.77" evidence="1"/>
<dbReference type="EMBL" id="CP000961">
    <property type="protein sequence ID" value="ACA87613.1"/>
    <property type="molecule type" value="Genomic_DNA"/>
</dbReference>
<dbReference type="RefSeq" id="WP_012325948.1">
    <property type="nucleotide sequence ID" value="NC_010506.1"/>
</dbReference>
<dbReference type="SMR" id="B1KPT0"/>
<dbReference type="STRING" id="392500.Swoo_3344"/>
<dbReference type="KEGG" id="swd:Swoo_3344"/>
<dbReference type="eggNOG" id="COG2518">
    <property type="taxonomic scope" value="Bacteria"/>
</dbReference>
<dbReference type="HOGENOM" id="CLU_055432_2_0_6"/>
<dbReference type="Proteomes" id="UP000002168">
    <property type="component" value="Chromosome"/>
</dbReference>
<dbReference type="GO" id="GO:0005737">
    <property type="term" value="C:cytoplasm"/>
    <property type="evidence" value="ECO:0007669"/>
    <property type="project" value="UniProtKB-SubCell"/>
</dbReference>
<dbReference type="GO" id="GO:0004719">
    <property type="term" value="F:protein-L-isoaspartate (D-aspartate) O-methyltransferase activity"/>
    <property type="evidence" value="ECO:0007669"/>
    <property type="project" value="UniProtKB-UniRule"/>
</dbReference>
<dbReference type="GO" id="GO:0032259">
    <property type="term" value="P:methylation"/>
    <property type="evidence" value="ECO:0007669"/>
    <property type="project" value="UniProtKB-KW"/>
</dbReference>
<dbReference type="GO" id="GO:0036211">
    <property type="term" value="P:protein modification process"/>
    <property type="evidence" value="ECO:0007669"/>
    <property type="project" value="UniProtKB-UniRule"/>
</dbReference>
<dbReference type="GO" id="GO:0030091">
    <property type="term" value="P:protein repair"/>
    <property type="evidence" value="ECO:0007669"/>
    <property type="project" value="UniProtKB-UniRule"/>
</dbReference>
<dbReference type="CDD" id="cd02440">
    <property type="entry name" value="AdoMet_MTases"/>
    <property type="match status" value="1"/>
</dbReference>
<dbReference type="FunFam" id="3.40.50.150:FF:000010">
    <property type="entry name" value="Protein-L-isoaspartate O-methyltransferase"/>
    <property type="match status" value="1"/>
</dbReference>
<dbReference type="Gene3D" id="3.40.50.150">
    <property type="entry name" value="Vaccinia Virus protein VP39"/>
    <property type="match status" value="1"/>
</dbReference>
<dbReference type="HAMAP" id="MF_00090">
    <property type="entry name" value="PIMT"/>
    <property type="match status" value="1"/>
</dbReference>
<dbReference type="InterPro" id="IPR000682">
    <property type="entry name" value="PCMT"/>
</dbReference>
<dbReference type="InterPro" id="IPR029063">
    <property type="entry name" value="SAM-dependent_MTases_sf"/>
</dbReference>
<dbReference type="NCBIfam" id="TIGR00080">
    <property type="entry name" value="pimt"/>
    <property type="match status" value="1"/>
</dbReference>
<dbReference type="NCBIfam" id="NF001453">
    <property type="entry name" value="PRK00312.1"/>
    <property type="match status" value="1"/>
</dbReference>
<dbReference type="PANTHER" id="PTHR11579">
    <property type="entry name" value="PROTEIN-L-ISOASPARTATE O-METHYLTRANSFERASE"/>
    <property type="match status" value="1"/>
</dbReference>
<dbReference type="PANTHER" id="PTHR11579:SF0">
    <property type="entry name" value="PROTEIN-L-ISOASPARTATE(D-ASPARTATE) O-METHYLTRANSFERASE"/>
    <property type="match status" value="1"/>
</dbReference>
<dbReference type="Pfam" id="PF01135">
    <property type="entry name" value="PCMT"/>
    <property type="match status" value="1"/>
</dbReference>
<dbReference type="SUPFAM" id="SSF53335">
    <property type="entry name" value="S-adenosyl-L-methionine-dependent methyltransferases"/>
    <property type="match status" value="1"/>
</dbReference>
<dbReference type="PROSITE" id="PS01279">
    <property type="entry name" value="PCMT"/>
    <property type="match status" value="1"/>
</dbReference>
<proteinExistence type="inferred from homology"/>
<feature type="chain" id="PRO_1000093293" description="Protein-L-isoaspartate O-methyltransferase">
    <location>
        <begin position="1"/>
        <end position="211"/>
    </location>
</feature>
<feature type="active site" evidence="1">
    <location>
        <position position="62"/>
    </location>
</feature>
<protein>
    <recommendedName>
        <fullName evidence="1">Protein-L-isoaspartate O-methyltransferase</fullName>
        <ecNumber evidence="1">2.1.1.77</ecNumber>
    </recommendedName>
    <alternativeName>
        <fullName evidence="1">L-isoaspartyl protein carboxyl methyltransferase</fullName>
    </alternativeName>
    <alternativeName>
        <fullName evidence="1">Protein L-isoaspartyl methyltransferase</fullName>
    </alternativeName>
    <alternativeName>
        <fullName evidence="1">Protein-beta-aspartate methyltransferase</fullName>
        <shortName evidence="1">PIMT</shortName>
    </alternativeName>
</protein>
<reference key="1">
    <citation type="submission" date="2008-02" db="EMBL/GenBank/DDBJ databases">
        <title>Complete sequence of Shewanella woodyi ATCC 51908.</title>
        <authorList>
            <consortium name="US DOE Joint Genome Institute"/>
            <person name="Copeland A."/>
            <person name="Lucas S."/>
            <person name="Lapidus A."/>
            <person name="Glavina del Rio T."/>
            <person name="Dalin E."/>
            <person name="Tice H."/>
            <person name="Bruce D."/>
            <person name="Goodwin L."/>
            <person name="Pitluck S."/>
            <person name="Sims D."/>
            <person name="Brettin T."/>
            <person name="Detter J.C."/>
            <person name="Han C."/>
            <person name="Kuske C.R."/>
            <person name="Schmutz J."/>
            <person name="Larimer F."/>
            <person name="Land M."/>
            <person name="Hauser L."/>
            <person name="Kyrpides N."/>
            <person name="Lykidis A."/>
            <person name="Zhao J.-S."/>
            <person name="Richardson P."/>
        </authorList>
    </citation>
    <scope>NUCLEOTIDE SEQUENCE [LARGE SCALE GENOMIC DNA]</scope>
    <source>
        <strain>ATCC 51908 / MS32</strain>
    </source>
</reference>
<sequence length="211" mass="22903">MSRVATTAALNLAKSLRDAGIRDEAVLQAVANTPRELFLDAALGHKAYENTALPIGMGQTISQPYIVARMTELLLEHKPKKVLEIGTGSGYQAAILAQLSPELCTVERIKSLQIQARQRLKRLDLHNISFKYGDGWKGWPNKGPFDAIMVTAAAATVPEALLGQLVDNGVLIIPVGDTSQQLLKVVRHGEQFSSEVVEIVRFVPLVNGELA</sequence>